<sequence length="128" mass="14605">MWKFASIVVLVVCLAWAVYCEDQRPPSLKTRFGRSADEPESDNYVSNDIMEKRSAQRPPSLKTRFGRSEGAEVMEKRSAQRPPSLKTRFGRSVANPESDGYMRKRSAESEPFVTRIRHGRANKKRAAN</sequence>
<accession>Q9GQV7</accession>
<comment type="function">
    <text evidence="2">Has a role in inhibiting host-seeking behavior during a reproductive cycle.</text>
</comment>
<comment type="subcellular location">
    <subcellularLocation>
        <location evidence="2">Secreted</location>
    </subcellularLocation>
</comment>
<comment type="tissue specificity">
    <text evidence="2">Expressed in the brain, terminal ganglion, and midgut of adults: numerous neurosecretory cells and midgut endocrine cells. Expression is dynamic depending on reproductive cycle.</text>
</comment>
<comment type="similarity">
    <text evidence="4">Belongs to the NPY family.</text>
</comment>
<reference evidence="4 5" key="1">
    <citation type="journal article" date="2002" name="J. Med. Entomol.">
        <title>Characterization of the AeaHP gene and its expression in the mosquito Aedes aegypti (Diptera: Culicidae).</title>
        <authorList>
            <person name="Stracker T.H."/>
            <person name="Thompson S."/>
            <person name="Grossman G.L."/>
            <person name="Riehle M.A."/>
            <person name="Brown M.R."/>
        </authorList>
    </citation>
    <scope>NUCLEOTIDE SEQUENCE [MRNA]</scope>
    <scope>FUNCTION</scope>
    <scope>SUBCELLULAR LOCATION</scope>
    <scope>TISSUE SPECIFICITY</scope>
    <source>
        <tissue evidence="2">Head</tissue>
    </source>
</reference>
<reference key="2">
    <citation type="journal article" date="2007" name="Science">
        <title>Genome sequence of Aedes aegypti, a major arbovirus vector.</title>
        <authorList>
            <person name="Nene V."/>
            <person name="Wortman J.R."/>
            <person name="Lawson D."/>
            <person name="Haas B.J."/>
            <person name="Kodira C.D."/>
            <person name="Tu Z.J."/>
            <person name="Loftus B.J."/>
            <person name="Xi Z."/>
            <person name="Megy K."/>
            <person name="Grabherr M."/>
            <person name="Ren Q."/>
            <person name="Zdobnov E.M."/>
            <person name="Lobo N.F."/>
            <person name="Campbell K.S."/>
            <person name="Brown S.E."/>
            <person name="Bonaldo M.F."/>
            <person name="Zhu J."/>
            <person name="Sinkins S.P."/>
            <person name="Hogenkamp D.G."/>
            <person name="Amedeo P."/>
            <person name="Arensburger P."/>
            <person name="Atkinson P.W."/>
            <person name="Bidwell S.L."/>
            <person name="Biedler J."/>
            <person name="Birney E."/>
            <person name="Bruggner R.V."/>
            <person name="Costas J."/>
            <person name="Coy M.R."/>
            <person name="Crabtree J."/>
            <person name="Crawford M."/>
            <person name="DeBruyn B."/>
            <person name="DeCaprio D."/>
            <person name="Eiglmeier K."/>
            <person name="Eisenstadt E."/>
            <person name="El-Dorry H."/>
            <person name="Gelbart W.M."/>
            <person name="Gomes S.L."/>
            <person name="Hammond M."/>
            <person name="Hannick L.I."/>
            <person name="Hogan J.R."/>
            <person name="Holmes M.H."/>
            <person name="Jaffe D."/>
            <person name="Johnston S.J."/>
            <person name="Kennedy R.C."/>
            <person name="Koo H."/>
            <person name="Kravitz S."/>
            <person name="Kriventseva E.V."/>
            <person name="Kulp D."/>
            <person name="Labutti K."/>
            <person name="Lee E."/>
            <person name="Li S."/>
            <person name="Lovin D.D."/>
            <person name="Mao C."/>
            <person name="Mauceli E."/>
            <person name="Menck C.F."/>
            <person name="Miller J.R."/>
            <person name="Montgomery P."/>
            <person name="Mori A."/>
            <person name="Nascimento A.L."/>
            <person name="Naveira H.F."/>
            <person name="Nusbaum C."/>
            <person name="O'Leary S.B."/>
            <person name="Orvis J."/>
            <person name="Pertea M."/>
            <person name="Quesneville H."/>
            <person name="Reidenbach K.R."/>
            <person name="Rogers Y.-H.C."/>
            <person name="Roth C.W."/>
            <person name="Schneider J.R."/>
            <person name="Schatz M."/>
            <person name="Shumway M."/>
            <person name="Stanke M."/>
            <person name="Stinson E.O."/>
            <person name="Tubio J.M.C."/>
            <person name="Vanzee J.P."/>
            <person name="Verjovski-Almeida S."/>
            <person name="Werner D."/>
            <person name="White O.R."/>
            <person name="Wyder S."/>
            <person name="Zeng Q."/>
            <person name="Zhao Q."/>
            <person name="Zhao Y."/>
            <person name="Hill C.A."/>
            <person name="Raikhel A.S."/>
            <person name="Soares M.B."/>
            <person name="Knudson D.L."/>
            <person name="Lee N.H."/>
            <person name="Galagan J."/>
            <person name="Salzberg S.L."/>
            <person name="Paulsen I.T."/>
            <person name="Dimopoulos G."/>
            <person name="Collins F.H."/>
            <person name="Bruce B."/>
            <person name="Fraser-Liggett C.M."/>
            <person name="Severson D.W."/>
        </authorList>
    </citation>
    <scope>NUCLEOTIDE SEQUENCE [LARGE SCALE GENOMIC DNA]</scope>
    <source>
        <strain>LVPib12</strain>
    </source>
</reference>
<reference evidence="4" key="3">
    <citation type="journal article" date="1989" name="Insect Biochem.">
        <title>Isolation and primary structure of neuropeptides from the mosquito, Aedes aegypti, immunoreactive to FMRFamide antiserum.</title>
        <authorList>
            <person name="Matsumoto S."/>
            <person name="Brown M.R."/>
            <person name="Crim J.W."/>
            <person name="Vigna S.R."/>
            <person name="Lea A.O."/>
        </authorList>
    </citation>
    <scope>PROTEIN SEQUENCE OF 23-32; 56-65 AND 80-89</scope>
    <scope>PYROGLUTAMATE FORMATION AT GLN-23; GLN-56 AND GLN-80</scope>
    <scope>HYDROXYLATION AT PRO-26; PRO-59 AND PRO-83</scope>
    <scope>AMIDATION AT PHE-32; PHE-65 AND PHE-89</scope>
    <source>
        <tissue evidence="3">Head</tissue>
    </source>
</reference>
<organism>
    <name type="scientific">Aedes aegypti</name>
    <name type="common">Yellowfever mosquito</name>
    <name type="synonym">Culex aegypti</name>
    <dbReference type="NCBI Taxonomy" id="7159"/>
    <lineage>
        <taxon>Eukaryota</taxon>
        <taxon>Metazoa</taxon>
        <taxon>Ecdysozoa</taxon>
        <taxon>Arthropoda</taxon>
        <taxon>Hexapoda</taxon>
        <taxon>Insecta</taxon>
        <taxon>Pterygota</taxon>
        <taxon>Neoptera</taxon>
        <taxon>Endopterygota</taxon>
        <taxon>Diptera</taxon>
        <taxon>Nematocera</taxon>
        <taxon>Culicoidea</taxon>
        <taxon>Culicidae</taxon>
        <taxon>Culicinae</taxon>
        <taxon>Aedini</taxon>
        <taxon>Aedes</taxon>
        <taxon>Stegomyia</taxon>
    </lineage>
</organism>
<feature type="signal peptide" evidence="3">
    <location>
        <begin position="1"/>
        <end position="22"/>
    </location>
</feature>
<feature type="peptide" id="PRO_5000056383" description="Decapeptide 1">
    <location>
        <begin position="23"/>
        <end position="32"/>
    </location>
</feature>
<feature type="propeptide" id="PRO_0000289079" evidence="3">
    <location>
        <begin position="35"/>
        <end position="55"/>
    </location>
</feature>
<feature type="peptide" id="PRO_5000056384" description="Decapeptide 2">
    <location>
        <begin position="56"/>
        <end position="65"/>
    </location>
</feature>
<feature type="propeptide" id="PRO_0000289080" evidence="3">
    <location>
        <begin position="68"/>
        <end position="79"/>
    </location>
</feature>
<feature type="peptide" id="PRO_5000056385" description="Decapeptide 3">
    <location>
        <begin position="80"/>
        <end position="89"/>
    </location>
</feature>
<feature type="propeptide" id="PRO_0000289081" evidence="3">
    <location>
        <begin position="92"/>
        <end position="128"/>
    </location>
</feature>
<feature type="region of interest" description="Disordered" evidence="1">
    <location>
        <begin position="27"/>
        <end position="128"/>
    </location>
</feature>
<feature type="compositionally biased region" description="Basic and acidic residues" evidence="1">
    <location>
        <begin position="66"/>
        <end position="78"/>
    </location>
</feature>
<feature type="compositionally biased region" description="Basic residues" evidence="1">
    <location>
        <begin position="115"/>
        <end position="128"/>
    </location>
</feature>
<feature type="modified residue" description="Pyrrolidone carboxylic acid" evidence="3">
    <location>
        <position position="23"/>
    </location>
</feature>
<feature type="modified residue" description="Hydroxyproline; partial" evidence="3">
    <location>
        <position position="26"/>
    </location>
</feature>
<feature type="modified residue" description="Phenylalanine amide" evidence="3">
    <location>
        <position position="32"/>
    </location>
</feature>
<feature type="modified residue" description="Pyrrolidone carboxylic acid" evidence="3">
    <location>
        <position position="56"/>
    </location>
</feature>
<feature type="modified residue" description="Hydroxyproline; partial" evidence="3">
    <location>
        <position position="59"/>
    </location>
</feature>
<feature type="modified residue" description="Phenylalanine amide" evidence="3">
    <location>
        <position position="65"/>
    </location>
</feature>
<feature type="modified residue" description="Pyrrolidone carboxylic acid" evidence="3">
    <location>
        <position position="80"/>
    </location>
</feature>
<feature type="modified residue" description="Hydroxyproline; partial" evidence="3">
    <location>
        <position position="83"/>
    </location>
</feature>
<feature type="modified residue" description="Phenylalanine amide" evidence="3">
    <location>
        <position position="89"/>
    </location>
</feature>
<name>HPEP_AEDAE</name>
<dbReference type="EMBL" id="AF155738">
    <property type="protein sequence ID" value="AAG43377.1"/>
    <property type="molecule type" value="mRNA"/>
</dbReference>
<dbReference type="SMR" id="Q9GQV7"/>
<dbReference type="VEuPathDB" id="VectorBase:AAEL024630"/>
<dbReference type="InParanoid" id="Q9GQV7"/>
<dbReference type="GO" id="GO:0005576">
    <property type="term" value="C:extracellular region"/>
    <property type="evidence" value="ECO:0000314"/>
    <property type="project" value="UniProtKB"/>
</dbReference>
<dbReference type="GO" id="GO:0005184">
    <property type="term" value="F:neuropeptide hormone activity"/>
    <property type="evidence" value="ECO:0000315"/>
    <property type="project" value="UniProtKB"/>
</dbReference>
<dbReference type="GO" id="GO:0032539">
    <property type="term" value="P:negative regulation of host-seeking behavior"/>
    <property type="evidence" value="ECO:0000315"/>
    <property type="project" value="UniProtKB"/>
</dbReference>
<dbReference type="GO" id="GO:0007218">
    <property type="term" value="P:neuropeptide signaling pathway"/>
    <property type="evidence" value="ECO:0000315"/>
    <property type="project" value="UniProtKB"/>
</dbReference>
<evidence type="ECO:0000256" key="1">
    <source>
        <dbReference type="SAM" id="MobiDB-lite"/>
    </source>
</evidence>
<evidence type="ECO:0000269" key="2">
    <source>
    </source>
</evidence>
<evidence type="ECO:0000269" key="3">
    <source ref="3"/>
</evidence>
<evidence type="ECO:0000305" key="4"/>
<evidence type="ECO:0000312" key="5">
    <source>
        <dbReference type="EMBL" id="AAG43377.1"/>
    </source>
</evidence>
<proteinExistence type="evidence at protein level"/>
<protein>
    <recommendedName>
        <fullName>Head peptide</fullName>
        <shortName>Aea-HP</shortName>
        <shortName>AeaHP</shortName>
    </recommendedName>
    <component>
        <recommendedName>
            <fullName>Decapeptide 1</fullName>
        </recommendedName>
        <alternativeName>
            <fullName>Decapeptide I</fullName>
        </alternativeName>
    </component>
    <component>
        <recommendedName>
            <fullName>Decapeptide 2</fullName>
        </recommendedName>
        <alternativeName>
            <fullName>Decapeptide II</fullName>
        </alternativeName>
    </component>
    <component>
        <recommendedName>
            <fullName>Decapeptide 3</fullName>
        </recommendedName>
        <alternativeName>
            <fullName>Decapeptide III</fullName>
        </alternativeName>
    </component>
</protein>
<keyword id="KW-0027">Amidation</keyword>
<keyword id="KW-0165">Cleavage on pair of basic residues</keyword>
<keyword id="KW-0903">Direct protein sequencing</keyword>
<keyword id="KW-0372">Hormone</keyword>
<keyword id="KW-0379">Hydroxylation</keyword>
<keyword id="KW-0527">Neuropeptide</keyword>
<keyword id="KW-0873">Pyrrolidone carboxylic acid</keyword>
<keyword id="KW-0964">Secreted</keyword>
<keyword id="KW-0732">Signal</keyword>
<gene>
    <name evidence="5" type="primary">HP-I</name>
</gene>